<protein>
    <recommendedName>
        <fullName evidence="5">UDP-N-acetylglucosamine transporter ROCK1</fullName>
    </recommendedName>
    <alternativeName>
        <fullName evidence="5">CMP-sialic acid transporter 5</fullName>
        <shortName evidence="5">CMP-SA-Tr 5</shortName>
        <shortName evidence="5">CMP-Sia-Tr 5</shortName>
    </alternativeName>
    <alternativeName>
        <fullName evidence="3">Protein REPRESSOR OF CYTOKININ DEFICIENCY 1</fullName>
    </alternativeName>
</protein>
<name>ROCK1_ARATH</name>
<evidence type="ECO:0000255" key="1"/>
<evidence type="ECO:0000269" key="2">
    <source>
    </source>
</evidence>
<evidence type="ECO:0000303" key="3">
    <source>
    </source>
</evidence>
<evidence type="ECO:0000303" key="4">
    <source ref="5"/>
</evidence>
<evidence type="ECO:0000305" key="5"/>
<evidence type="ECO:0000312" key="6">
    <source>
        <dbReference type="Araport" id="AT5G65000"/>
    </source>
</evidence>
<evidence type="ECO:0000312" key="7">
    <source>
        <dbReference type="EMBL" id="BAA97312.1"/>
    </source>
</evidence>
<sequence length="325" mass="34836">MATANGAKSPSSMGPKVLFYSILLTLQYGAQPLISKRCIRKDVIVTSSVLTCEIVKVICALILMARNGSLKGLAKEWTLMGSLTASGLPAAIYALQNSLLQISYRSLDSLTFSILNQTKIFFTAFFTFIILRQKQSILQIGALCLLIMAAVLLSVGEGSNKDSSGINADQKLFYGIIPVLAASVLSGLASSLCQWASQVKKHSSYLMTVEMSIVGSLCLLVSTLKSPDGEAIKKYGFFHGWTALTLVPVISNALGGILVGLVTSHAGGVRKGFVIVSALLVTALLQFAFEGKPPSSYCLVALPLVMSSISMYQKYPYIDKKKKKV</sequence>
<proteinExistence type="evidence at transcript level"/>
<dbReference type="EMBL" id="AB019236">
    <property type="protein sequence ID" value="BAA97312.1"/>
    <property type="status" value="ALT_SEQ"/>
    <property type="molecule type" value="Genomic_DNA"/>
</dbReference>
<dbReference type="EMBL" id="CP002688">
    <property type="protein sequence ID" value="AED97981.1"/>
    <property type="molecule type" value="Genomic_DNA"/>
</dbReference>
<dbReference type="EMBL" id="CP002688">
    <property type="protein sequence ID" value="AED97982.1"/>
    <property type="molecule type" value="Genomic_DNA"/>
</dbReference>
<dbReference type="EMBL" id="AY072020">
    <property type="protein sequence ID" value="AAL57713.1"/>
    <property type="molecule type" value="mRNA"/>
</dbReference>
<dbReference type="EMBL" id="AK226979">
    <property type="protein sequence ID" value="BAE99046.1"/>
    <property type="molecule type" value="mRNA"/>
</dbReference>
<dbReference type="EMBL" id="BT029465">
    <property type="protein sequence ID" value="ABK59694.1"/>
    <property type="molecule type" value="mRNA"/>
</dbReference>
<dbReference type="EMBL" id="BT030009">
    <property type="protein sequence ID" value="ABN04747.1"/>
    <property type="molecule type" value="mRNA"/>
</dbReference>
<dbReference type="EMBL" id="AY085268">
    <property type="protein sequence ID" value="AAM62500.1"/>
    <property type="molecule type" value="mRNA"/>
</dbReference>
<dbReference type="RefSeq" id="NP_569004.1">
    <molecule id="Q8LES0-1"/>
    <property type="nucleotide sequence ID" value="NM_125899.4"/>
</dbReference>
<dbReference type="RefSeq" id="NP_974995.1">
    <molecule id="Q8LES0-2"/>
    <property type="nucleotide sequence ID" value="NM_203266.2"/>
</dbReference>
<dbReference type="SMR" id="Q8LES0"/>
<dbReference type="FunCoup" id="Q8LES0">
    <property type="interactions" value="120"/>
</dbReference>
<dbReference type="STRING" id="3702.Q8LES0"/>
<dbReference type="TCDB" id="2.A.7.12.15">
    <property type="family name" value="the drug/metabolite transporter (dmt) superfamily"/>
</dbReference>
<dbReference type="iPTMnet" id="Q8LES0"/>
<dbReference type="PaxDb" id="3702-AT5G65000.1"/>
<dbReference type="ProteomicsDB" id="222720">
    <molecule id="Q8LES0-1"/>
</dbReference>
<dbReference type="EnsemblPlants" id="AT5G65000.1">
    <molecule id="Q8LES0-1"/>
    <property type="protein sequence ID" value="AT5G65000.1"/>
    <property type="gene ID" value="AT5G65000"/>
</dbReference>
<dbReference type="EnsemblPlants" id="AT5G65000.2">
    <molecule id="Q8LES0-2"/>
    <property type="protein sequence ID" value="AT5G65000.2"/>
    <property type="gene ID" value="AT5G65000"/>
</dbReference>
<dbReference type="GeneID" id="836624"/>
<dbReference type="Gramene" id="AT5G65000.1">
    <molecule id="Q8LES0-1"/>
    <property type="protein sequence ID" value="AT5G65000.1"/>
    <property type="gene ID" value="AT5G65000"/>
</dbReference>
<dbReference type="Gramene" id="AT5G65000.2">
    <molecule id="Q8LES0-2"/>
    <property type="protein sequence ID" value="AT5G65000.2"/>
    <property type="gene ID" value="AT5G65000"/>
</dbReference>
<dbReference type="KEGG" id="ath:AT5G65000"/>
<dbReference type="Araport" id="AT5G65000"/>
<dbReference type="TAIR" id="AT5G65000">
    <property type="gene designation" value="ROCK1"/>
</dbReference>
<dbReference type="eggNOG" id="KOG2234">
    <property type="taxonomic scope" value="Eukaryota"/>
</dbReference>
<dbReference type="HOGENOM" id="CLU_046494_0_0_1"/>
<dbReference type="InParanoid" id="Q8LES0"/>
<dbReference type="OMA" id="CYYFLNP"/>
<dbReference type="OrthoDB" id="408493at2759"/>
<dbReference type="PhylomeDB" id="Q8LES0"/>
<dbReference type="PRO" id="PR:Q8LES0"/>
<dbReference type="Proteomes" id="UP000006548">
    <property type="component" value="Chromosome 5"/>
</dbReference>
<dbReference type="ExpressionAtlas" id="Q8LES0">
    <property type="expression patterns" value="baseline and differential"/>
</dbReference>
<dbReference type="GO" id="GO:0005783">
    <property type="term" value="C:endoplasmic reticulum"/>
    <property type="evidence" value="ECO:0000314"/>
    <property type="project" value="TAIR"/>
</dbReference>
<dbReference type="GO" id="GO:0005789">
    <property type="term" value="C:endoplasmic reticulum membrane"/>
    <property type="evidence" value="ECO:0007669"/>
    <property type="project" value="UniProtKB-SubCell"/>
</dbReference>
<dbReference type="GO" id="GO:0000139">
    <property type="term" value="C:Golgi membrane"/>
    <property type="evidence" value="ECO:0007669"/>
    <property type="project" value="InterPro"/>
</dbReference>
<dbReference type="GO" id="GO:0015136">
    <property type="term" value="F:sialic acid transmembrane transporter activity"/>
    <property type="evidence" value="ECO:0000250"/>
    <property type="project" value="UniProtKB"/>
</dbReference>
<dbReference type="GO" id="GO:0005463">
    <property type="term" value="F:UDP-N-acetylgalactosamine transmembrane transporter activity"/>
    <property type="evidence" value="ECO:0000314"/>
    <property type="project" value="TAIR"/>
</dbReference>
<dbReference type="GO" id="GO:0010584">
    <property type="term" value="P:pollen exine formation"/>
    <property type="evidence" value="ECO:0000315"/>
    <property type="project" value="TAIR"/>
</dbReference>
<dbReference type="GO" id="GO:1902183">
    <property type="term" value="P:regulation of shoot apical meristem development"/>
    <property type="evidence" value="ECO:0000315"/>
    <property type="project" value="TAIR"/>
</dbReference>
<dbReference type="GO" id="GO:0015739">
    <property type="term" value="P:sialic acid transport"/>
    <property type="evidence" value="ECO:0000250"/>
    <property type="project" value="UniProtKB"/>
</dbReference>
<dbReference type="GO" id="GO:0015789">
    <property type="term" value="P:UDP-N-acetylgalactosamine transmembrane transport"/>
    <property type="evidence" value="ECO:0000314"/>
    <property type="project" value="TAIR"/>
</dbReference>
<dbReference type="GO" id="GO:1990569">
    <property type="term" value="P:UDP-N-acetylglucosamine transmembrane transport"/>
    <property type="evidence" value="ECO:0000314"/>
    <property type="project" value="TAIR"/>
</dbReference>
<dbReference type="InterPro" id="IPR007271">
    <property type="entry name" value="Nuc_sug_transpt"/>
</dbReference>
<dbReference type="PANTHER" id="PTHR10231">
    <property type="entry name" value="NUCLEOTIDE-SUGAR TRANSMEMBRANE TRANSPORTER"/>
    <property type="match status" value="1"/>
</dbReference>
<dbReference type="Pfam" id="PF04142">
    <property type="entry name" value="Nuc_sug_transp"/>
    <property type="match status" value="1"/>
</dbReference>
<dbReference type="PIRSF" id="PIRSF005799">
    <property type="entry name" value="UDP-gal_transpt"/>
    <property type="match status" value="1"/>
</dbReference>
<dbReference type="SUPFAM" id="SSF103481">
    <property type="entry name" value="Multidrug resistance efflux transporter EmrE"/>
    <property type="match status" value="1"/>
</dbReference>
<feature type="chain" id="PRO_0000416028" description="UDP-N-acetylglucosamine transporter ROCK1">
    <location>
        <begin position="1"/>
        <end position="325"/>
    </location>
</feature>
<feature type="topological domain" description="Cytoplasmic" evidence="1">
    <location>
        <begin position="1"/>
        <end position="13"/>
    </location>
</feature>
<feature type="transmembrane region" description="Helical" evidence="1">
    <location>
        <begin position="14"/>
        <end position="34"/>
    </location>
</feature>
<feature type="topological domain" description="Lumenal" evidence="1">
    <location>
        <begin position="35"/>
        <end position="42"/>
    </location>
</feature>
<feature type="transmembrane region" description="Helical" evidence="1">
    <location>
        <begin position="43"/>
        <end position="63"/>
    </location>
</feature>
<feature type="topological domain" description="Cytoplasmic" evidence="1">
    <location>
        <begin position="64"/>
        <end position="109"/>
    </location>
</feature>
<feature type="transmembrane region" description="Helical" evidence="1">
    <location>
        <begin position="110"/>
        <end position="130"/>
    </location>
</feature>
<feature type="topological domain" description="Lumenal" evidence="1">
    <location>
        <begin position="131"/>
        <end position="135"/>
    </location>
</feature>
<feature type="transmembrane region" description="Helical" evidence="1">
    <location>
        <begin position="136"/>
        <end position="156"/>
    </location>
</feature>
<feature type="topological domain" description="Cytoplasmic" evidence="1">
    <location>
        <begin position="157"/>
        <end position="171"/>
    </location>
</feature>
<feature type="transmembrane region" description="Helical" evidence="1">
    <location>
        <begin position="172"/>
        <end position="192"/>
    </location>
</feature>
<feature type="topological domain" description="Lumenal" evidence="1">
    <location>
        <begin position="193"/>
        <end position="203"/>
    </location>
</feature>
<feature type="transmembrane region" description="Helical" evidence="1">
    <location>
        <begin position="204"/>
        <end position="224"/>
    </location>
</feature>
<feature type="topological domain" description="Cytoplasmic" evidence="1">
    <location>
        <begin position="225"/>
        <end position="241"/>
    </location>
</feature>
<feature type="transmembrane region" description="Helical" evidence="1">
    <location>
        <begin position="242"/>
        <end position="262"/>
    </location>
</feature>
<feature type="topological domain" description="Lumenal" evidence="1">
    <location>
        <begin position="263"/>
        <end position="270"/>
    </location>
</feature>
<feature type="transmembrane region" description="Helical" evidence="1">
    <location>
        <begin position="271"/>
        <end position="291"/>
    </location>
</feature>
<feature type="topological domain" description="Cytoplasmic" evidence="1">
    <location>
        <begin position="292"/>
        <end position="325"/>
    </location>
</feature>
<feature type="splice variant" id="VSP_042459" description="In isoform 2." evidence="4">
    <original>PVISNALGGILVGLVTSHAGGVRKGFVIVSALLVTALLQFAFEGKPPSSYCLVALPLVMSSISMYQKYPYIDKKKKKV</original>
    <variation>INYLFFLSTKQFF</variation>
    <location>
        <begin position="248"/>
        <end position="325"/>
    </location>
</feature>
<feature type="sequence conflict" description="In Ref. 3; AAL57713." evidence="5" ref="3">
    <original>T</original>
    <variation>R</variation>
    <location>
        <position position="25"/>
    </location>
</feature>
<accession>Q8LES0</accession>
<accession>A0JQ95</accession>
<accession>Q8VYH1</accession>
<accession>Q9LV78</accession>
<gene>
    <name evidence="3" type="primary">ROCK1</name>
    <name evidence="6" type="ordered locus">At5g65000</name>
    <name evidence="7" type="ORF">MXK3.23</name>
</gene>
<reference key="1">
    <citation type="journal article" date="2000" name="DNA Res.">
        <title>Structural analysis of Arabidopsis thaliana chromosome 5. X. Sequence features of the regions of 3,076,755 bp covered by sixty P1 and TAC clones.</title>
        <authorList>
            <person name="Sato S."/>
            <person name="Nakamura Y."/>
            <person name="Kaneko T."/>
            <person name="Katoh T."/>
            <person name="Asamizu E."/>
            <person name="Kotani H."/>
            <person name="Tabata S."/>
        </authorList>
    </citation>
    <scope>NUCLEOTIDE SEQUENCE [LARGE SCALE GENOMIC DNA]</scope>
    <source>
        <strain>cv. Columbia</strain>
    </source>
</reference>
<reference key="2">
    <citation type="journal article" date="2017" name="Plant J.">
        <title>Araport11: a complete reannotation of the Arabidopsis thaliana reference genome.</title>
        <authorList>
            <person name="Cheng C.Y."/>
            <person name="Krishnakumar V."/>
            <person name="Chan A.P."/>
            <person name="Thibaud-Nissen F."/>
            <person name="Schobel S."/>
            <person name="Town C.D."/>
        </authorList>
    </citation>
    <scope>GENOME REANNOTATION</scope>
    <source>
        <strain>cv. Columbia</strain>
    </source>
</reference>
<reference key="3">
    <citation type="journal article" date="2003" name="Science">
        <title>Empirical analysis of transcriptional activity in the Arabidopsis genome.</title>
        <authorList>
            <person name="Yamada K."/>
            <person name="Lim J."/>
            <person name="Dale J.M."/>
            <person name="Chen H."/>
            <person name="Shinn P."/>
            <person name="Palm C.J."/>
            <person name="Southwick A.M."/>
            <person name="Wu H.C."/>
            <person name="Kim C.J."/>
            <person name="Nguyen M."/>
            <person name="Pham P.K."/>
            <person name="Cheuk R.F."/>
            <person name="Karlin-Newmann G."/>
            <person name="Liu S.X."/>
            <person name="Lam B."/>
            <person name="Sakano H."/>
            <person name="Wu T."/>
            <person name="Yu G."/>
            <person name="Miranda M."/>
            <person name="Quach H.L."/>
            <person name="Tripp M."/>
            <person name="Chang C.H."/>
            <person name="Lee J.M."/>
            <person name="Toriumi M.J."/>
            <person name="Chan M.M."/>
            <person name="Tang C.C."/>
            <person name="Onodera C.S."/>
            <person name="Deng J.M."/>
            <person name="Akiyama K."/>
            <person name="Ansari Y."/>
            <person name="Arakawa T."/>
            <person name="Banh J."/>
            <person name="Banno F."/>
            <person name="Bowser L."/>
            <person name="Brooks S.Y."/>
            <person name="Carninci P."/>
            <person name="Chao Q."/>
            <person name="Choy N."/>
            <person name="Enju A."/>
            <person name="Goldsmith A.D."/>
            <person name="Gurjal M."/>
            <person name="Hansen N.F."/>
            <person name="Hayashizaki Y."/>
            <person name="Johnson-Hopson C."/>
            <person name="Hsuan V.W."/>
            <person name="Iida K."/>
            <person name="Karnes M."/>
            <person name="Khan S."/>
            <person name="Koesema E."/>
            <person name="Ishida J."/>
            <person name="Jiang P.X."/>
            <person name="Jones T."/>
            <person name="Kawai J."/>
            <person name="Kamiya A."/>
            <person name="Meyers C."/>
            <person name="Nakajima M."/>
            <person name="Narusaka M."/>
            <person name="Seki M."/>
            <person name="Sakurai T."/>
            <person name="Satou M."/>
            <person name="Tamse R."/>
            <person name="Vaysberg M."/>
            <person name="Wallender E.K."/>
            <person name="Wong C."/>
            <person name="Yamamura Y."/>
            <person name="Yuan S."/>
            <person name="Shinozaki K."/>
            <person name="Davis R.W."/>
            <person name="Theologis A."/>
            <person name="Ecker J.R."/>
        </authorList>
    </citation>
    <scope>NUCLEOTIDE SEQUENCE [LARGE SCALE MRNA] (ISOFORM 1)</scope>
    <source>
        <strain>cv. Columbia</strain>
    </source>
</reference>
<reference key="4">
    <citation type="submission" date="2006-07" db="EMBL/GenBank/DDBJ databases">
        <title>Large-scale analysis of RIKEN Arabidopsis full-length (RAFL) cDNAs.</title>
        <authorList>
            <person name="Totoki Y."/>
            <person name="Seki M."/>
            <person name="Ishida J."/>
            <person name="Nakajima M."/>
            <person name="Enju A."/>
            <person name="Kamiya A."/>
            <person name="Narusaka M."/>
            <person name="Shin-i T."/>
            <person name="Nakagawa M."/>
            <person name="Sakamoto N."/>
            <person name="Oishi K."/>
            <person name="Kohara Y."/>
            <person name="Kobayashi M."/>
            <person name="Toyoda A."/>
            <person name="Sakaki Y."/>
            <person name="Sakurai T."/>
            <person name="Iida K."/>
            <person name="Akiyama K."/>
            <person name="Satou M."/>
            <person name="Toyoda T."/>
            <person name="Konagaya A."/>
            <person name="Carninci P."/>
            <person name="Kawai J."/>
            <person name="Hayashizaki Y."/>
            <person name="Shinozaki K."/>
        </authorList>
    </citation>
    <scope>NUCLEOTIDE SEQUENCE [LARGE SCALE MRNA] (ISOFORM 1)</scope>
    <source>
        <strain>cv. Columbia</strain>
    </source>
</reference>
<reference key="5">
    <citation type="submission" date="2007-01" db="EMBL/GenBank/DDBJ databases">
        <title>Arabidopsis ORF clones.</title>
        <authorList>
            <person name="Bautista V.R."/>
            <person name="Kim C.J."/>
            <person name="Chen H."/>
            <person name="Wu S.Y."/>
            <person name="De Los Reyes C."/>
            <person name="Ecker J.R."/>
        </authorList>
    </citation>
    <scope>NUCLEOTIDE SEQUENCE [LARGE SCALE MRNA] (ISOFORMS 1 AND 2)</scope>
    <source>
        <strain>cv. Columbia</strain>
    </source>
</reference>
<reference key="6">
    <citation type="submission" date="2002-03" db="EMBL/GenBank/DDBJ databases">
        <title>Full-length cDNA from Arabidopsis thaliana.</title>
        <authorList>
            <person name="Brover V.V."/>
            <person name="Troukhan M.E."/>
            <person name="Alexandrov N.A."/>
            <person name="Lu Y.-P."/>
            <person name="Flavell R.B."/>
            <person name="Feldmann K.A."/>
        </authorList>
    </citation>
    <scope>NUCLEOTIDE SEQUENCE [LARGE SCALE MRNA] (ISOFORM 1)</scope>
</reference>
<reference key="7">
    <citation type="journal article" date="2005" name="Glycobiology">
        <title>Molecular cloning of two Arabidopsis UDP-galactose transporters by complementation of a deficient Chinese hamster ovary cell line.</title>
        <authorList>
            <person name="Bakker H."/>
            <person name="Routier F."/>
            <person name="Oelmann S."/>
            <person name="Jordi W."/>
            <person name="Lommen A."/>
            <person name="Gerardy-Schahn R."/>
            <person name="Bosch D."/>
        </authorList>
    </citation>
    <scope>GENE FAMILY</scope>
</reference>
<reference key="8">
    <citation type="journal article" date="2014" name="Proc. Natl. Acad. Sci. U.S.A.">
        <title>The Golgi localized bifunctional UDP-rhamnose/UDP-galactose transporter family of Arabidopsis.</title>
        <authorList>
            <person name="Rautengarten C."/>
            <person name="Ebert B."/>
            <person name="Moreno I."/>
            <person name="Temple H."/>
            <person name="Herter T."/>
            <person name="Link B."/>
            <person name="Donas-Cofre D."/>
            <person name="Moreno A."/>
            <person name="Saez-Aguayo S."/>
            <person name="Blanco F."/>
            <person name="Mortimer J.C."/>
            <person name="Schultink A."/>
            <person name="Reiter W.D."/>
            <person name="Dupree P."/>
            <person name="Pauly M."/>
            <person name="Heazlewood J.L."/>
            <person name="Scheller H.V."/>
            <person name="Orellana A."/>
        </authorList>
    </citation>
    <scope>GENE FAMILY</scope>
</reference>
<reference key="9">
    <citation type="journal article" date="2015" name="Proc. Natl. Acad. Sci. U.S.A.">
        <title>Arabidopsis ROCK1 transports UDP-GlcNAc/UDP-GalNAc and regulates ER protein quality control and cytokinin activity.</title>
        <authorList>
            <person name="Niemann M.C."/>
            <person name="Bartrina I."/>
            <person name="Ashikov A."/>
            <person name="Weber H."/>
            <person name="Novak O."/>
            <person name="Spichal L."/>
            <person name="Strnad M."/>
            <person name="Strasser R."/>
            <person name="Bakker H."/>
            <person name="Schmuelling T."/>
            <person name="Werner T."/>
        </authorList>
    </citation>
    <scope>FUNCTION</scope>
    <scope>SUBCELLULAR LOCATION</scope>
    <scope>TISSUE SPECIFICITY</scope>
</reference>
<keyword id="KW-0025">Alternative splicing</keyword>
<keyword id="KW-0256">Endoplasmic reticulum</keyword>
<keyword id="KW-0472">Membrane</keyword>
<keyword id="KW-1185">Reference proteome</keyword>
<keyword id="KW-0762">Sugar transport</keyword>
<keyword id="KW-0812">Transmembrane</keyword>
<keyword id="KW-1133">Transmembrane helix</keyword>
<keyword id="KW-0813">Transport</keyword>
<organism>
    <name type="scientific">Arabidopsis thaliana</name>
    <name type="common">Mouse-ear cress</name>
    <dbReference type="NCBI Taxonomy" id="3702"/>
    <lineage>
        <taxon>Eukaryota</taxon>
        <taxon>Viridiplantae</taxon>
        <taxon>Streptophyta</taxon>
        <taxon>Embryophyta</taxon>
        <taxon>Tracheophyta</taxon>
        <taxon>Spermatophyta</taxon>
        <taxon>Magnoliopsida</taxon>
        <taxon>eudicotyledons</taxon>
        <taxon>Gunneridae</taxon>
        <taxon>Pentapetalae</taxon>
        <taxon>rosids</taxon>
        <taxon>malvids</taxon>
        <taxon>Brassicales</taxon>
        <taxon>Brassicaceae</taxon>
        <taxon>Camelineae</taxon>
        <taxon>Arabidopsis</taxon>
    </lineage>
</organism>
<comment type="function">
    <text evidence="2">Mediates the transport of UDP-linked acetylated hexosamines across the endoplasmic reticulum (ER) membrane (PubMed:25535363). Facilitates UDP-N-acetylglucosamine (UDP-GlcNAc) and UDP-N-acetylgalactosamine (UDP-GalNAc) transport (PubMed:25535363). Regulates the cytokinin signal in meristematic cells through modulating activity of cytokinin oxidases/dehydrogenases (PubMed:25535363). Part of the ER quality control system, which determines the fate of aberrant proteins in the secretory pathway (PubMed:25535363).</text>
</comment>
<comment type="subcellular location">
    <subcellularLocation>
        <location evidence="2">Endoplasmic reticulum membrane</location>
        <topology evidence="1">Multi-pass membrane protein</topology>
    </subcellularLocation>
</comment>
<comment type="alternative products">
    <event type="alternative splicing"/>
    <isoform>
        <id>Q8LES0-1</id>
        <name>1</name>
        <sequence type="displayed"/>
    </isoform>
    <isoform>
        <id>Q8LES0-2</id>
        <name>2</name>
        <sequence type="described" ref="VSP_042459"/>
    </isoform>
</comment>
<comment type="tissue specificity">
    <text evidence="2">Expressed in roots, cotyledons, leaves, stems, flowers and siliques.</text>
</comment>
<comment type="similarity">
    <text evidence="5">Belongs to the nucleotide-sugar transporter family. CMP-Sialate:CMP antiporter (TC 2.A.7.12) subfamily.</text>
</comment>
<comment type="sequence caution" evidence="5">
    <conflict type="erroneous gene model prediction">
        <sequence resource="EMBL-CDS" id="BAA97312"/>
    </conflict>
</comment>